<evidence type="ECO:0000255" key="1">
    <source>
        <dbReference type="HAMAP-Rule" id="MF_03119"/>
    </source>
</evidence>
<accession>A7EGZ3</accession>
<dbReference type="EC" id="5.3.1.23" evidence="1"/>
<dbReference type="EMBL" id="CH476625">
    <property type="protein sequence ID" value="EDO02109.1"/>
    <property type="molecule type" value="Genomic_DNA"/>
</dbReference>
<dbReference type="RefSeq" id="XP_001594777.1">
    <property type="nucleotide sequence ID" value="XM_001594727.1"/>
</dbReference>
<dbReference type="SMR" id="A7EGZ3"/>
<dbReference type="FunCoup" id="A7EGZ3">
    <property type="interactions" value="702"/>
</dbReference>
<dbReference type="STRING" id="665079.A7EGZ3"/>
<dbReference type="EnsemblFungi" id="EDO02109">
    <property type="protein sequence ID" value="EDO02109"/>
    <property type="gene ID" value="SS1G_04585"/>
</dbReference>
<dbReference type="GeneID" id="5490914"/>
<dbReference type="KEGG" id="ssl:SS1G_04585"/>
<dbReference type="VEuPathDB" id="FungiDB:sscle_02g015640"/>
<dbReference type="eggNOG" id="KOG1468">
    <property type="taxonomic scope" value="Eukaryota"/>
</dbReference>
<dbReference type="HOGENOM" id="CLU_016218_1_3_1"/>
<dbReference type="InParanoid" id="A7EGZ3"/>
<dbReference type="OMA" id="CETRPLN"/>
<dbReference type="OrthoDB" id="2461at2759"/>
<dbReference type="UniPathway" id="UPA00904">
    <property type="reaction ID" value="UER00874"/>
</dbReference>
<dbReference type="Proteomes" id="UP000001312">
    <property type="component" value="Unassembled WGS sequence"/>
</dbReference>
<dbReference type="GO" id="GO:0005737">
    <property type="term" value="C:cytoplasm"/>
    <property type="evidence" value="ECO:0007669"/>
    <property type="project" value="UniProtKB-SubCell"/>
</dbReference>
<dbReference type="GO" id="GO:0005634">
    <property type="term" value="C:nucleus"/>
    <property type="evidence" value="ECO:0007669"/>
    <property type="project" value="UniProtKB-SubCell"/>
</dbReference>
<dbReference type="GO" id="GO:0046523">
    <property type="term" value="F:S-methyl-5-thioribose-1-phosphate isomerase activity"/>
    <property type="evidence" value="ECO:0000318"/>
    <property type="project" value="GO_Central"/>
</dbReference>
<dbReference type="GO" id="GO:0019509">
    <property type="term" value="P:L-methionine salvage from methylthioadenosine"/>
    <property type="evidence" value="ECO:0000318"/>
    <property type="project" value="GO_Central"/>
</dbReference>
<dbReference type="FunFam" id="1.20.120.420:FF:000006">
    <property type="entry name" value="Methylthioribose-1-phosphate isomerase"/>
    <property type="match status" value="1"/>
</dbReference>
<dbReference type="FunFam" id="3.40.50.10470:FF:000006">
    <property type="entry name" value="Methylthioribose-1-phosphate isomerase"/>
    <property type="match status" value="1"/>
</dbReference>
<dbReference type="Gene3D" id="1.20.120.420">
    <property type="entry name" value="translation initiation factor eif-2b, domain 1"/>
    <property type="match status" value="1"/>
</dbReference>
<dbReference type="Gene3D" id="3.40.50.10470">
    <property type="entry name" value="Translation initiation factor eif-2b, domain 2"/>
    <property type="match status" value="1"/>
</dbReference>
<dbReference type="HAMAP" id="MF_01678">
    <property type="entry name" value="Salvage_MtnA"/>
    <property type="match status" value="1"/>
</dbReference>
<dbReference type="InterPro" id="IPR000649">
    <property type="entry name" value="IF-2B-related"/>
</dbReference>
<dbReference type="InterPro" id="IPR005251">
    <property type="entry name" value="IF-M1Pi"/>
</dbReference>
<dbReference type="InterPro" id="IPR042529">
    <property type="entry name" value="IF_2B-like_C"/>
</dbReference>
<dbReference type="InterPro" id="IPR011559">
    <property type="entry name" value="Initiation_fac_2B_a/b/d"/>
</dbReference>
<dbReference type="InterPro" id="IPR027363">
    <property type="entry name" value="M1Pi_N"/>
</dbReference>
<dbReference type="InterPro" id="IPR037171">
    <property type="entry name" value="NagB/RpiA_transferase-like"/>
</dbReference>
<dbReference type="NCBIfam" id="TIGR00524">
    <property type="entry name" value="eIF-2B_rel"/>
    <property type="match status" value="1"/>
</dbReference>
<dbReference type="NCBIfam" id="NF004326">
    <property type="entry name" value="PRK05720.1"/>
    <property type="match status" value="1"/>
</dbReference>
<dbReference type="NCBIfam" id="TIGR00512">
    <property type="entry name" value="salvage_mtnA"/>
    <property type="match status" value="1"/>
</dbReference>
<dbReference type="PANTHER" id="PTHR43475">
    <property type="entry name" value="METHYLTHIORIBOSE-1-PHOSPHATE ISOMERASE"/>
    <property type="match status" value="1"/>
</dbReference>
<dbReference type="PANTHER" id="PTHR43475:SF1">
    <property type="entry name" value="METHYLTHIORIBOSE-1-PHOSPHATE ISOMERASE"/>
    <property type="match status" value="1"/>
</dbReference>
<dbReference type="Pfam" id="PF01008">
    <property type="entry name" value="IF-2B"/>
    <property type="match status" value="1"/>
</dbReference>
<dbReference type="SUPFAM" id="SSF100950">
    <property type="entry name" value="NagB/RpiA/CoA transferase-like"/>
    <property type="match status" value="1"/>
</dbReference>
<comment type="function">
    <text evidence="1">Catalyzes the interconversion of methylthioribose-1-phosphate (MTR-1-P) into methylthioribulose-1-phosphate (MTRu-1-P).</text>
</comment>
<comment type="catalytic activity">
    <reaction evidence="1">
        <text>5-(methylsulfanyl)-alpha-D-ribose 1-phosphate = 5-(methylsulfanyl)-D-ribulose 1-phosphate</text>
        <dbReference type="Rhea" id="RHEA:19989"/>
        <dbReference type="ChEBI" id="CHEBI:58533"/>
        <dbReference type="ChEBI" id="CHEBI:58548"/>
        <dbReference type="EC" id="5.3.1.23"/>
    </reaction>
</comment>
<comment type="pathway">
    <text evidence="1">Amino-acid biosynthesis; L-methionine biosynthesis via salvage pathway; L-methionine from S-methyl-5-thio-alpha-D-ribose 1-phosphate: step 1/6.</text>
</comment>
<comment type="subcellular location">
    <subcellularLocation>
        <location evidence="1">Cytoplasm</location>
    </subcellularLocation>
    <subcellularLocation>
        <location evidence="1">Nucleus</location>
    </subcellularLocation>
</comment>
<comment type="similarity">
    <text evidence="1">Belongs to the eIF-2B alpha/beta/delta subunits family. MtnA subfamily.</text>
</comment>
<organism>
    <name type="scientific">Sclerotinia sclerotiorum (strain ATCC 18683 / 1980 / Ss-1)</name>
    <name type="common">White mold</name>
    <name type="synonym">Whetzelinia sclerotiorum</name>
    <dbReference type="NCBI Taxonomy" id="665079"/>
    <lineage>
        <taxon>Eukaryota</taxon>
        <taxon>Fungi</taxon>
        <taxon>Dikarya</taxon>
        <taxon>Ascomycota</taxon>
        <taxon>Pezizomycotina</taxon>
        <taxon>Leotiomycetes</taxon>
        <taxon>Helotiales</taxon>
        <taxon>Sclerotiniaceae</taxon>
        <taxon>Sclerotinia</taxon>
    </lineage>
</organism>
<protein>
    <recommendedName>
        <fullName evidence="1">Methylthioribose-1-phosphate isomerase</fullName>
        <shortName evidence="1">M1Pi</shortName>
        <shortName evidence="1">MTR-1-P isomerase</shortName>
        <ecNumber evidence="1">5.3.1.23</ecNumber>
    </recommendedName>
    <alternativeName>
        <fullName evidence="1">S-methyl-5-thioribose-1-phosphate isomerase</fullName>
    </alternativeName>
    <alternativeName>
        <fullName evidence="1">Translation initiation factor eIF-2B subunit alpha/beta/delta-like protein</fullName>
    </alternativeName>
</protein>
<sequence>MAGLEAIKYGRGRLEVLDQLRLPHEFVYDNVSTCEEAFDSIKSMRVRGAPAIAIVAALALAVELHHEKDGSKTKQEAVQYINKRLDYLLGSRPTAVDLSNAIKLLKRVSQSAAEATNALDDSAACADVRKGYIDAAEKILEDDLTTNLAIGRYGAEYLRRQQMPIGGEEDDEDPSKFFTTSPPCTQGAPDRTYRKLSVLTHCNTGSLATSGHGTALGIIRSLHKMNYLDHAYCTETRPYNQGSRLTAFELVYEKIPSTLITDSMAGALFARMKESKNISAVIVGADRVARNGDTANKIGTYSLAVLAKAHNIKFIVAAPTTSIDLETVSGADIKIEDRAPTELTQISGAVVGKDGHVDVNTTARVAIAHQGIDVWNPSFDVTPSMYIDAVITEKGEVVRSSKGTFDFKTIMPERWAQQVEGKELSAETNVKAHVDDGTQFPMENI</sequence>
<proteinExistence type="inferred from homology"/>
<keyword id="KW-0028">Amino-acid biosynthesis</keyword>
<keyword id="KW-0963">Cytoplasm</keyword>
<keyword id="KW-0413">Isomerase</keyword>
<keyword id="KW-0486">Methionine biosynthesis</keyword>
<keyword id="KW-0539">Nucleus</keyword>
<keyword id="KW-1185">Reference proteome</keyword>
<name>MTNA_SCLS1</name>
<reference key="1">
    <citation type="journal article" date="2011" name="PLoS Genet.">
        <title>Genomic analysis of the necrotrophic fungal pathogens Sclerotinia sclerotiorum and Botrytis cinerea.</title>
        <authorList>
            <person name="Amselem J."/>
            <person name="Cuomo C.A."/>
            <person name="van Kan J.A.L."/>
            <person name="Viaud M."/>
            <person name="Benito E.P."/>
            <person name="Couloux A."/>
            <person name="Coutinho P.M."/>
            <person name="de Vries R.P."/>
            <person name="Dyer P.S."/>
            <person name="Fillinger S."/>
            <person name="Fournier E."/>
            <person name="Gout L."/>
            <person name="Hahn M."/>
            <person name="Kohn L."/>
            <person name="Lapalu N."/>
            <person name="Plummer K.M."/>
            <person name="Pradier J.-M."/>
            <person name="Quevillon E."/>
            <person name="Sharon A."/>
            <person name="Simon A."/>
            <person name="ten Have A."/>
            <person name="Tudzynski B."/>
            <person name="Tudzynski P."/>
            <person name="Wincker P."/>
            <person name="Andrew M."/>
            <person name="Anthouard V."/>
            <person name="Beever R.E."/>
            <person name="Beffa R."/>
            <person name="Benoit I."/>
            <person name="Bouzid O."/>
            <person name="Brault B."/>
            <person name="Chen Z."/>
            <person name="Choquer M."/>
            <person name="Collemare J."/>
            <person name="Cotton P."/>
            <person name="Danchin E.G."/>
            <person name="Da Silva C."/>
            <person name="Gautier A."/>
            <person name="Giraud C."/>
            <person name="Giraud T."/>
            <person name="Gonzalez C."/>
            <person name="Grossetete S."/>
            <person name="Gueldener U."/>
            <person name="Henrissat B."/>
            <person name="Howlett B.J."/>
            <person name="Kodira C."/>
            <person name="Kretschmer M."/>
            <person name="Lappartient A."/>
            <person name="Leroch M."/>
            <person name="Levis C."/>
            <person name="Mauceli E."/>
            <person name="Neuveglise C."/>
            <person name="Oeser B."/>
            <person name="Pearson M."/>
            <person name="Poulain J."/>
            <person name="Poussereau N."/>
            <person name="Quesneville H."/>
            <person name="Rascle C."/>
            <person name="Schumacher J."/>
            <person name="Segurens B."/>
            <person name="Sexton A."/>
            <person name="Silva E."/>
            <person name="Sirven C."/>
            <person name="Soanes D.M."/>
            <person name="Talbot N.J."/>
            <person name="Templeton M."/>
            <person name="Yandava C."/>
            <person name="Yarden O."/>
            <person name="Zeng Q."/>
            <person name="Rollins J.A."/>
            <person name="Lebrun M.-H."/>
            <person name="Dickman M."/>
        </authorList>
    </citation>
    <scope>NUCLEOTIDE SEQUENCE [LARGE SCALE GENOMIC DNA]</scope>
    <source>
        <strain>ATCC 18683 / 1980 / Ss-1</strain>
    </source>
</reference>
<gene>
    <name type="primary">mri1</name>
    <name type="ORF">SS1G_04585</name>
</gene>
<feature type="chain" id="PRO_0000402053" description="Methylthioribose-1-phosphate isomerase">
    <location>
        <begin position="1"/>
        <end position="445"/>
    </location>
</feature>
<feature type="active site" description="Proton donor" evidence="1">
    <location>
        <position position="286"/>
    </location>
</feature>
<feature type="site" description="Transition state stabilizer" evidence="1">
    <location>
        <position position="202"/>
    </location>
</feature>